<reference key="1">
    <citation type="journal article" date="2006" name="Science">
        <title>Genome of rice cluster I archaea -- the key methane producers in the rice rhizosphere.</title>
        <authorList>
            <person name="Erkel C."/>
            <person name="Kube M."/>
            <person name="Reinhardt R."/>
            <person name="Liesack W."/>
        </authorList>
    </citation>
    <scope>NUCLEOTIDE SEQUENCE [LARGE SCALE GENOMIC DNA]</scope>
    <source>
        <strain>DSM 22066 / NBRC 105507 / MRE50</strain>
    </source>
</reference>
<protein>
    <recommendedName>
        <fullName evidence="1">DNA-directed RNA polymerase subunit Rpo10</fullName>
        <ecNumber evidence="1">2.7.7.6</ecNumber>
    </recommendedName>
    <alternativeName>
        <fullName evidence="1">DNA-directed RNA polymerase subunit N</fullName>
    </alternativeName>
</protein>
<name>RPO10_METAR</name>
<gene>
    <name evidence="1" type="primary">rpo10</name>
    <name evidence="1" type="synonym">rpoN</name>
    <name type="ordered locus">UNCMA_28110</name>
    <name type="ORF">LRC404</name>
</gene>
<evidence type="ECO:0000255" key="1">
    <source>
        <dbReference type="HAMAP-Rule" id="MF_00250"/>
    </source>
</evidence>
<keyword id="KW-0963">Cytoplasm</keyword>
<keyword id="KW-0240">DNA-directed RNA polymerase</keyword>
<keyword id="KW-0479">Metal-binding</keyword>
<keyword id="KW-0548">Nucleotidyltransferase</keyword>
<keyword id="KW-1185">Reference proteome</keyword>
<keyword id="KW-0804">Transcription</keyword>
<keyword id="KW-0808">Transferase</keyword>
<keyword id="KW-0862">Zinc</keyword>
<dbReference type="EC" id="2.7.7.6" evidence="1"/>
<dbReference type="EMBL" id="AM114193">
    <property type="protein sequence ID" value="CAJ35366.1"/>
    <property type="molecule type" value="Genomic_DNA"/>
</dbReference>
<dbReference type="RefSeq" id="WP_012037126.1">
    <property type="nucleotide sequence ID" value="NC_009464.1"/>
</dbReference>
<dbReference type="SMR" id="Q0W8C7"/>
<dbReference type="STRING" id="351160.LRC404"/>
<dbReference type="GeneID" id="5143176"/>
<dbReference type="KEGG" id="rci:LRC404"/>
<dbReference type="PATRIC" id="fig|351160.9.peg.2881"/>
<dbReference type="eggNOG" id="arCOG04244">
    <property type="taxonomic scope" value="Archaea"/>
</dbReference>
<dbReference type="OrthoDB" id="371754at2157"/>
<dbReference type="Proteomes" id="UP000000663">
    <property type="component" value="Chromosome"/>
</dbReference>
<dbReference type="GO" id="GO:0005737">
    <property type="term" value="C:cytoplasm"/>
    <property type="evidence" value="ECO:0007669"/>
    <property type="project" value="UniProtKB-SubCell"/>
</dbReference>
<dbReference type="GO" id="GO:0000428">
    <property type="term" value="C:DNA-directed RNA polymerase complex"/>
    <property type="evidence" value="ECO:0007669"/>
    <property type="project" value="UniProtKB-KW"/>
</dbReference>
<dbReference type="GO" id="GO:0003677">
    <property type="term" value="F:DNA binding"/>
    <property type="evidence" value="ECO:0007669"/>
    <property type="project" value="InterPro"/>
</dbReference>
<dbReference type="GO" id="GO:0003899">
    <property type="term" value="F:DNA-directed RNA polymerase activity"/>
    <property type="evidence" value="ECO:0007669"/>
    <property type="project" value="UniProtKB-UniRule"/>
</dbReference>
<dbReference type="GO" id="GO:0008270">
    <property type="term" value="F:zinc ion binding"/>
    <property type="evidence" value="ECO:0007669"/>
    <property type="project" value="UniProtKB-UniRule"/>
</dbReference>
<dbReference type="GO" id="GO:0006351">
    <property type="term" value="P:DNA-templated transcription"/>
    <property type="evidence" value="ECO:0007669"/>
    <property type="project" value="UniProtKB-UniRule"/>
</dbReference>
<dbReference type="Gene3D" id="1.10.10.60">
    <property type="entry name" value="Homeodomain-like"/>
    <property type="match status" value="1"/>
</dbReference>
<dbReference type="HAMAP" id="MF_00250">
    <property type="entry name" value="RNApol_arch_Rpo10"/>
    <property type="match status" value="1"/>
</dbReference>
<dbReference type="InterPro" id="IPR023580">
    <property type="entry name" value="RNA_pol_su_RPB10"/>
</dbReference>
<dbReference type="InterPro" id="IPR020789">
    <property type="entry name" value="RNA_pol_suN_Zn-BS"/>
</dbReference>
<dbReference type="InterPro" id="IPR000268">
    <property type="entry name" value="RPABC5/Rpb10"/>
</dbReference>
<dbReference type="NCBIfam" id="NF003089">
    <property type="entry name" value="PRK04016.1"/>
    <property type="match status" value="1"/>
</dbReference>
<dbReference type="PANTHER" id="PTHR23431:SF3">
    <property type="entry name" value="DNA-DIRECTED RNA POLYMERASES I, II, AND III SUBUNIT RPABC5"/>
    <property type="match status" value="1"/>
</dbReference>
<dbReference type="PANTHER" id="PTHR23431">
    <property type="entry name" value="DNA-DIRECTED RNA POLYMERASES I, II, AND III SUBUNIT RPABC5 FAMILY MEMBER"/>
    <property type="match status" value="1"/>
</dbReference>
<dbReference type="Pfam" id="PF01194">
    <property type="entry name" value="RNA_pol_N"/>
    <property type="match status" value="1"/>
</dbReference>
<dbReference type="PIRSF" id="PIRSF005653">
    <property type="entry name" value="RNA_pol_N/8_sub"/>
    <property type="match status" value="1"/>
</dbReference>
<dbReference type="SUPFAM" id="SSF46924">
    <property type="entry name" value="RNA polymerase subunit RPB10"/>
    <property type="match status" value="1"/>
</dbReference>
<dbReference type="PROSITE" id="PS01112">
    <property type="entry name" value="RNA_POL_N_8KD"/>
    <property type="match status" value="1"/>
</dbReference>
<sequence length="71" mass="8311">MIPVRCFTCGKVISEVWEEYKARVEERKMNLQHGEVLKVGDILDDLGVERYCCRRMLLSHVELVDVLAPYQ</sequence>
<proteinExistence type="inferred from homology"/>
<accession>Q0W8C7</accession>
<comment type="function">
    <text evidence="1">DNA-dependent RNA polymerase (RNAP) catalyzes the transcription of DNA into RNA using the four ribonucleoside triphosphates as substrates.</text>
</comment>
<comment type="catalytic activity">
    <reaction evidence="1">
        <text>RNA(n) + a ribonucleoside 5'-triphosphate = RNA(n+1) + diphosphate</text>
        <dbReference type="Rhea" id="RHEA:21248"/>
        <dbReference type="Rhea" id="RHEA-COMP:14527"/>
        <dbReference type="Rhea" id="RHEA-COMP:17342"/>
        <dbReference type="ChEBI" id="CHEBI:33019"/>
        <dbReference type="ChEBI" id="CHEBI:61557"/>
        <dbReference type="ChEBI" id="CHEBI:140395"/>
        <dbReference type="EC" id="2.7.7.6"/>
    </reaction>
</comment>
<comment type="cofactor">
    <cofactor evidence="1">
        <name>Zn(2+)</name>
        <dbReference type="ChEBI" id="CHEBI:29105"/>
    </cofactor>
    <text evidence="1">Binds 1 zinc ion.</text>
</comment>
<comment type="subunit">
    <text evidence="1">Part of the RNA polymerase complex.</text>
</comment>
<comment type="subcellular location">
    <subcellularLocation>
        <location evidence="1">Cytoplasm</location>
    </subcellularLocation>
</comment>
<comment type="similarity">
    <text evidence="1">Belongs to the archaeal Rpo10/eukaryotic RPB10 RNA polymerase subunit family.</text>
</comment>
<feature type="chain" id="PRO_0000304202" description="DNA-directed RNA polymerase subunit Rpo10">
    <location>
        <begin position="1"/>
        <end position="71"/>
    </location>
</feature>
<feature type="binding site" evidence="1">
    <location>
        <position position="6"/>
    </location>
    <ligand>
        <name>Zn(2+)</name>
        <dbReference type="ChEBI" id="CHEBI:29105"/>
    </ligand>
</feature>
<feature type="binding site" evidence="1">
    <location>
        <position position="9"/>
    </location>
    <ligand>
        <name>Zn(2+)</name>
        <dbReference type="ChEBI" id="CHEBI:29105"/>
    </ligand>
</feature>
<feature type="binding site" evidence="1">
    <location>
        <position position="52"/>
    </location>
    <ligand>
        <name>Zn(2+)</name>
        <dbReference type="ChEBI" id="CHEBI:29105"/>
    </ligand>
</feature>
<feature type="binding site" evidence="1">
    <location>
        <position position="53"/>
    </location>
    <ligand>
        <name>Zn(2+)</name>
        <dbReference type="ChEBI" id="CHEBI:29105"/>
    </ligand>
</feature>
<organism>
    <name type="scientific">Methanocella arvoryzae (strain DSM 22066 / NBRC 105507 / MRE50)</name>
    <dbReference type="NCBI Taxonomy" id="351160"/>
    <lineage>
        <taxon>Archaea</taxon>
        <taxon>Methanobacteriati</taxon>
        <taxon>Methanobacteriota</taxon>
        <taxon>Stenosarchaea group</taxon>
        <taxon>Methanomicrobia</taxon>
        <taxon>Methanocellales</taxon>
        <taxon>Methanocellaceae</taxon>
        <taxon>Methanocella</taxon>
    </lineage>
</organism>